<keyword id="KW-0025">Alternative splicing</keyword>
<keyword id="KW-0158">Chromosome</keyword>
<keyword id="KW-0227">DNA damage</keyword>
<keyword id="KW-0233">DNA recombination</keyword>
<keyword id="KW-0234">DNA repair</keyword>
<keyword id="KW-0539">Nucleus</keyword>
<keyword id="KW-0597">Phosphoprotein</keyword>
<keyword id="KW-1267">Proteomics identification</keyword>
<keyword id="KW-1185">Reference proteome</keyword>
<keyword id="KW-0779">Telomere</keyword>
<proteinExistence type="evidence at protein level"/>
<reference key="1">
    <citation type="journal article" date="2004" name="Nat. Genet.">
        <title>Complete sequencing and characterization of 21,243 full-length human cDNAs.</title>
        <authorList>
            <person name="Ota T."/>
            <person name="Suzuki Y."/>
            <person name="Nishikawa T."/>
            <person name="Otsuki T."/>
            <person name="Sugiyama T."/>
            <person name="Irie R."/>
            <person name="Wakamatsu A."/>
            <person name="Hayashi K."/>
            <person name="Sato H."/>
            <person name="Nagai K."/>
            <person name="Kimura K."/>
            <person name="Makita H."/>
            <person name="Sekine M."/>
            <person name="Obayashi M."/>
            <person name="Nishi T."/>
            <person name="Shibahara T."/>
            <person name="Tanaka T."/>
            <person name="Ishii S."/>
            <person name="Yamamoto J."/>
            <person name="Saito K."/>
            <person name="Kawai Y."/>
            <person name="Isono Y."/>
            <person name="Nakamura Y."/>
            <person name="Nagahari K."/>
            <person name="Murakami K."/>
            <person name="Yasuda T."/>
            <person name="Iwayanagi T."/>
            <person name="Wagatsuma M."/>
            <person name="Shiratori A."/>
            <person name="Sudo H."/>
            <person name="Hosoiri T."/>
            <person name="Kaku Y."/>
            <person name="Kodaira H."/>
            <person name="Kondo H."/>
            <person name="Sugawara M."/>
            <person name="Takahashi M."/>
            <person name="Kanda K."/>
            <person name="Yokoi T."/>
            <person name="Furuya T."/>
            <person name="Kikkawa E."/>
            <person name="Omura Y."/>
            <person name="Abe K."/>
            <person name="Kamihara K."/>
            <person name="Katsuta N."/>
            <person name="Sato K."/>
            <person name="Tanikawa M."/>
            <person name="Yamazaki M."/>
            <person name="Ninomiya K."/>
            <person name="Ishibashi T."/>
            <person name="Yamashita H."/>
            <person name="Murakawa K."/>
            <person name="Fujimori K."/>
            <person name="Tanai H."/>
            <person name="Kimata M."/>
            <person name="Watanabe M."/>
            <person name="Hiraoka S."/>
            <person name="Chiba Y."/>
            <person name="Ishida S."/>
            <person name="Ono Y."/>
            <person name="Takiguchi S."/>
            <person name="Watanabe S."/>
            <person name="Yosida M."/>
            <person name="Hotuta T."/>
            <person name="Kusano J."/>
            <person name="Kanehori K."/>
            <person name="Takahashi-Fujii A."/>
            <person name="Hara H."/>
            <person name="Tanase T.-O."/>
            <person name="Nomura Y."/>
            <person name="Togiya S."/>
            <person name="Komai F."/>
            <person name="Hara R."/>
            <person name="Takeuchi K."/>
            <person name="Arita M."/>
            <person name="Imose N."/>
            <person name="Musashino K."/>
            <person name="Yuuki H."/>
            <person name="Oshima A."/>
            <person name="Sasaki N."/>
            <person name="Aotsuka S."/>
            <person name="Yoshikawa Y."/>
            <person name="Matsunawa H."/>
            <person name="Ichihara T."/>
            <person name="Shiohata N."/>
            <person name="Sano S."/>
            <person name="Moriya S."/>
            <person name="Momiyama H."/>
            <person name="Satoh N."/>
            <person name="Takami S."/>
            <person name="Terashima Y."/>
            <person name="Suzuki O."/>
            <person name="Nakagawa S."/>
            <person name="Senoh A."/>
            <person name="Mizoguchi H."/>
            <person name="Goto Y."/>
            <person name="Shimizu F."/>
            <person name="Wakebe H."/>
            <person name="Hishigaki H."/>
            <person name="Watanabe T."/>
            <person name="Sugiyama A."/>
            <person name="Takemoto M."/>
            <person name="Kawakami B."/>
            <person name="Yamazaki M."/>
            <person name="Watanabe K."/>
            <person name="Kumagai A."/>
            <person name="Itakura S."/>
            <person name="Fukuzumi Y."/>
            <person name="Fujimori Y."/>
            <person name="Komiyama M."/>
            <person name="Tashiro H."/>
            <person name="Tanigami A."/>
            <person name="Fujiwara T."/>
            <person name="Ono T."/>
            <person name="Yamada K."/>
            <person name="Fujii Y."/>
            <person name="Ozaki K."/>
            <person name="Hirao M."/>
            <person name="Ohmori Y."/>
            <person name="Kawabata A."/>
            <person name="Hikiji T."/>
            <person name="Kobatake N."/>
            <person name="Inagaki H."/>
            <person name="Ikema Y."/>
            <person name="Okamoto S."/>
            <person name="Okitani R."/>
            <person name="Kawakami T."/>
            <person name="Noguchi S."/>
            <person name="Itoh T."/>
            <person name="Shigeta K."/>
            <person name="Senba T."/>
            <person name="Matsumura K."/>
            <person name="Nakajima Y."/>
            <person name="Mizuno T."/>
            <person name="Morinaga M."/>
            <person name="Sasaki M."/>
            <person name="Togashi T."/>
            <person name="Oyama M."/>
            <person name="Hata H."/>
            <person name="Watanabe M."/>
            <person name="Komatsu T."/>
            <person name="Mizushima-Sugano J."/>
            <person name="Satoh T."/>
            <person name="Shirai Y."/>
            <person name="Takahashi Y."/>
            <person name="Nakagawa K."/>
            <person name="Okumura K."/>
            <person name="Nagase T."/>
            <person name="Nomura N."/>
            <person name="Kikuchi H."/>
            <person name="Masuho Y."/>
            <person name="Yamashita R."/>
            <person name="Nakai K."/>
            <person name="Yada T."/>
            <person name="Nakamura Y."/>
            <person name="Ohara O."/>
            <person name="Isogai T."/>
            <person name="Sugano S."/>
        </authorList>
    </citation>
    <scope>NUCLEOTIDE SEQUENCE [LARGE SCALE MRNA] (ISOFORM 1)</scope>
    <source>
        <tissue>Adipose tissue</tissue>
    </source>
</reference>
<reference key="2">
    <citation type="submission" date="2005-04" db="EMBL/GenBank/DDBJ databases">
        <authorList>
            <person name="Suzuki Y."/>
            <person name="Sugano S."/>
            <person name="Totoki Y."/>
            <person name="Toyoda A."/>
            <person name="Takeda T."/>
            <person name="Sakaki Y."/>
            <person name="Tanaka A."/>
            <person name="Yokoyama S."/>
        </authorList>
    </citation>
    <scope>NUCLEOTIDE SEQUENCE [LARGE SCALE MRNA] (ISOFORM 1)</scope>
    <source>
        <tissue>Adipose tissue</tissue>
    </source>
</reference>
<reference key="3">
    <citation type="journal article" date="2004" name="Nature">
        <title>The DNA sequence and comparative analysis of human chromosome 10.</title>
        <authorList>
            <person name="Deloukas P."/>
            <person name="Earthrowl M.E."/>
            <person name="Grafham D.V."/>
            <person name="Rubenfield M."/>
            <person name="French L."/>
            <person name="Steward C.A."/>
            <person name="Sims S.K."/>
            <person name="Jones M.C."/>
            <person name="Searle S."/>
            <person name="Scott C."/>
            <person name="Howe K."/>
            <person name="Hunt S.E."/>
            <person name="Andrews T.D."/>
            <person name="Gilbert J.G.R."/>
            <person name="Swarbreck D."/>
            <person name="Ashurst J.L."/>
            <person name="Taylor A."/>
            <person name="Battles J."/>
            <person name="Bird C.P."/>
            <person name="Ainscough R."/>
            <person name="Almeida J.P."/>
            <person name="Ashwell R.I.S."/>
            <person name="Ambrose K.D."/>
            <person name="Babbage A.K."/>
            <person name="Bagguley C.L."/>
            <person name="Bailey J."/>
            <person name="Banerjee R."/>
            <person name="Bates K."/>
            <person name="Beasley H."/>
            <person name="Bray-Allen S."/>
            <person name="Brown A.J."/>
            <person name="Brown J.Y."/>
            <person name="Burford D.C."/>
            <person name="Burrill W."/>
            <person name="Burton J."/>
            <person name="Cahill P."/>
            <person name="Camire D."/>
            <person name="Carter N.P."/>
            <person name="Chapman J.C."/>
            <person name="Clark S.Y."/>
            <person name="Clarke G."/>
            <person name="Clee C.M."/>
            <person name="Clegg S."/>
            <person name="Corby N."/>
            <person name="Coulson A."/>
            <person name="Dhami P."/>
            <person name="Dutta I."/>
            <person name="Dunn M."/>
            <person name="Faulkner L."/>
            <person name="Frankish A."/>
            <person name="Frankland J.A."/>
            <person name="Garner P."/>
            <person name="Garnett J."/>
            <person name="Gribble S."/>
            <person name="Griffiths C."/>
            <person name="Grocock R."/>
            <person name="Gustafson E."/>
            <person name="Hammond S."/>
            <person name="Harley J.L."/>
            <person name="Hart E."/>
            <person name="Heath P.D."/>
            <person name="Ho T.P."/>
            <person name="Hopkins B."/>
            <person name="Horne J."/>
            <person name="Howden P.J."/>
            <person name="Huckle E."/>
            <person name="Hynds C."/>
            <person name="Johnson C."/>
            <person name="Johnson D."/>
            <person name="Kana A."/>
            <person name="Kay M."/>
            <person name="Kimberley A.M."/>
            <person name="Kershaw J.K."/>
            <person name="Kokkinaki M."/>
            <person name="Laird G.K."/>
            <person name="Lawlor S."/>
            <person name="Lee H.M."/>
            <person name="Leongamornlert D.A."/>
            <person name="Laird G."/>
            <person name="Lloyd C."/>
            <person name="Lloyd D.M."/>
            <person name="Loveland J."/>
            <person name="Lovell J."/>
            <person name="McLaren S."/>
            <person name="McLay K.E."/>
            <person name="McMurray A."/>
            <person name="Mashreghi-Mohammadi M."/>
            <person name="Matthews L."/>
            <person name="Milne S."/>
            <person name="Nickerson T."/>
            <person name="Nguyen M."/>
            <person name="Overton-Larty E."/>
            <person name="Palmer S.A."/>
            <person name="Pearce A.V."/>
            <person name="Peck A.I."/>
            <person name="Pelan S."/>
            <person name="Phillimore B."/>
            <person name="Porter K."/>
            <person name="Rice C.M."/>
            <person name="Rogosin A."/>
            <person name="Ross M.T."/>
            <person name="Sarafidou T."/>
            <person name="Sehra H.K."/>
            <person name="Shownkeen R."/>
            <person name="Skuce C.D."/>
            <person name="Smith M."/>
            <person name="Standring L."/>
            <person name="Sycamore N."/>
            <person name="Tester J."/>
            <person name="Thorpe A."/>
            <person name="Torcasso W."/>
            <person name="Tracey A."/>
            <person name="Tromans A."/>
            <person name="Tsolas J."/>
            <person name="Wall M."/>
            <person name="Walsh J."/>
            <person name="Wang H."/>
            <person name="Weinstock K."/>
            <person name="West A.P."/>
            <person name="Willey D.L."/>
            <person name="Whitehead S.L."/>
            <person name="Wilming L."/>
            <person name="Wray P.W."/>
            <person name="Young L."/>
            <person name="Chen Y."/>
            <person name="Lovering R.C."/>
            <person name="Moschonas N.K."/>
            <person name="Siebert R."/>
            <person name="Fechtel K."/>
            <person name="Bentley D."/>
            <person name="Durbin R.M."/>
            <person name="Hubbard T."/>
            <person name="Doucette-Stamm L."/>
            <person name="Beck S."/>
            <person name="Smith D.R."/>
            <person name="Rogers J."/>
        </authorList>
    </citation>
    <scope>NUCLEOTIDE SEQUENCE [LARGE SCALE GENOMIC DNA]</scope>
</reference>
<reference key="4">
    <citation type="journal article" date="2004" name="Genome Res.">
        <title>The status, quality, and expansion of the NIH full-length cDNA project: the Mammalian Gene Collection (MGC).</title>
        <authorList>
            <consortium name="The MGC Project Team"/>
        </authorList>
    </citation>
    <scope>NUCLEOTIDE SEQUENCE [LARGE SCALE MRNA] (ISOFORMS 1 AND 2)</scope>
    <source>
        <tissue>Skin</tissue>
    </source>
</reference>
<reference key="5">
    <citation type="journal article" date="2004" name="Proc. Natl. Acad. Sci. U.S.A.">
        <title>Large-scale cDNA transfection screening for genes related to cancer development and progression.</title>
        <authorList>
            <person name="Wan D."/>
            <person name="Gong Y."/>
            <person name="Qin W."/>
            <person name="Zhang P."/>
            <person name="Li J."/>
            <person name="Wei L."/>
            <person name="Zhou X."/>
            <person name="Li H."/>
            <person name="Qiu X."/>
            <person name="Zhong F."/>
            <person name="He L."/>
            <person name="Yu J."/>
            <person name="Yao G."/>
            <person name="Jiang H."/>
            <person name="Qian L."/>
            <person name="Yu Y."/>
            <person name="Shu H."/>
            <person name="Chen X."/>
            <person name="Xu H."/>
            <person name="Guo M."/>
            <person name="Pan Z."/>
            <person name="Chen Y."/>
            <person name="Ge C."/>
            <person name="Yang S."/>
            <person name="Gu J."/>
        </authorList>
    </citation>
    <scope>NUCLEOTIDE SEQUENCE [LARGE SCALE MRNA] OF 102-385 (ISOFORM 2)</scope>
</reference>
<reference key="6">
    <citation type="journal article" date="2007" name="Science">
        <title>ATM and ATR substrate analysis reveals extensive protein networks responsive to DNA damage.</title>
        <authorList>
            <person name="Matsuoka S."/>
            <person name="Ballif B.A."/>
            <person name="Smogorzewska A."/>
            <person name="McDonald E.R. III"/>
            <person name="Hurov K.E."/>
            <person name="Luo J."/>
            <person name="Bakalarski C.E."/>
            <person name="Zhao Z."/>
            <person name="Solimini N."/>
            <person name="Lerenthal Y."/>
            <person name="Shiloh Y."/>
            <person name="Gygi S.P."/>
            <person name="Elledge S.J."/>
        </authorList>
    </citation>
    <scope>PHOSPHORYLATION [LARGE SCALE ANALYSIS] AT THR-345 AND SER-377</scope>
    <scope>IDENTIFICATION BY MASS SPECTROMETRY [LARGE SCALE ANALYSIS]</scope>
    <source>
        <tissue>Embryonic kidney</tissue>
    </source>
</reference>
<reference key="7">
    <citation type="journal article" date="2008" name="Mol. Cell. Biol.">
        <title>Identification of the proteins, including MAGEG1, that make up the human SMC5-6 protein complex.</title>
        <authorList>
            <person name="Taylor E.M."/>
            <person name="Copsey A.C."/>
            <person name="Hudson J.J."/>
            <person name="Vidot S."/>
            <person name="Lehmann A.R."/>
        </authorList>
    </citation>
    <scope>FUNCTION</scope>
    <scope>SUBCELLULAR LOCATION</scope>
    <scope>INTERACTION WITH SMC6 AND NSMCE1</scope>
    <scope>IDENTIFICATION IN THE SMC5-SMC6 COMPLEX</scope>
</reference>
<reference key="8">
    <citation type="journal article" date="2011" name="Sci. Signal.">
        <title>System-wide temporal characterization of the proteome and phosphoproteome of human embryonic stem cell differentiation.</title>
        <authorList>
            <person name="Rigbolt K.T."/>
            <person name="Prokhorova T.A."/>
            <person name="Akimov V."/>
            <person name="Henningsen J."/>
            <person name="Johansen P.T."/>
            <person name="Kratchmarova I."/>
            <person name="Kassem M."/>
            <person name="Mann M."/>
            <person name="Olsen J.V."/>
            <person name="Blagoev B."/>
        </authorList>
    </citation>
    <scope>IDENTIFICATION BY MASS SPECTROMETRY [LARGE SCALE ANALYSIS]</scope>
</reference>
<reference key="9">
    <citation type="journal article" date="2013" name="J. Proteome Res.">
        <title>Toward a comprehensive characterization of a human cancer cell phosphoproteome.</title>
        <authorList>
            <person name="Zhou H."/>
            <person name="Di Palma S."/>
            <person name="Preisinger C."/>
            <person name="Peng M."/>
            <person name="Polat A.N."/>
            <person name="Heck A.J."/>
            <person name="Mohammed S."/>
        </authorList>
    </citation>
    <scope>IDENTIFICATION BY MASS SPECTROMETRY [LARGE SCALE ANALYSIS]</scope>
    <source>
        <tissue>Erythroleukemia</tissue>
    </source>
</reference>
<reference key="10">
    <citation type="journal article" date="2016" name="J. Clin. Invest.">
        <title>Destabilized SMC5/6 complex leads to chromosome breakage syndrome with severe lung disease.</title>
        <authorList>
            <person name="van der Crabben S.N."/>
            <person name="Hennus M.P."/>
            <person name="McGregor G.A."/>
            <person name="Ritter D.I."/>
            <person name="Nagamani S.C."/>
            <person name="Wells O.S."/>
            <person name="Harakalova M."/>
            <person name="Chinn I.K."/>
            <person name="Alt A."/>
            <person name="Vondrova L."/>
            <person name="Hochstenbach R."/>
            <person name="van Montfrans J.M."/>
            <person name="Terheggen-Lagro S.W."/>
            <person name="van Lieshout S."/>
            <person name="van Roosmalen M.J."/>
            <person name="Renkens I."/>
            <person name="Duran K."/>
            <person name="Nijman I.J."/>
            <person name="Kloosterman W.P."/>
            <person name="Hennekam E."/>
            <person name="Orange J.S."/>
            <person name="van Hasselt P.M."/>
            <person name="Wheeler D.A."/>
            <person name="Palecek J.J."/>
            <person name="Lehmann A.R."/>
            <person name="Oliver A.W."/>
            <person name="Pearl L.H."/>
            <person name="Plon S.E."/>
            <person name="Murray J.M."/>
            <person name="van Haaften G."/>
        </authorList>
    </citation>
    <scope>INTERACTION WITH NSMCE3</scope>
</reference>
<comment type="function">
    <text evidence="2">Component of the SMC5-SMC6 complex, a complex involved in DNA double-strand breaks by homologous recombination. The complex may promote sister chromatid homologous recombination by recruiting the SMC1-SMC3 cohesin complex to double-strand breaks. The complex is required for telomere maintenance via recombination in ALT (alternative lengthening of telomeres) cell lines and mediates sumoylation of shelterin complex (telosome) components which is proposed to lead to shelterin complex disassembly in ALT-associated PML bodies (APBs). Is involved in positive regulation of response to DNA damage stimulus.</text>
</comment>
<comment type="subunit">
    <text evidence="2 3">Component of the SMC5-SMC6 complex which consists at least of SMC5, SMC6, NSMCE2, NSMCE1, NSMCE4A or EID3 and NSMCE3. NSMCE1, NSMCE4A or EID3 and NSMCE3 probably form a subcomplex that bridges the head domains of the SMC5:SMC6 heterodimer (PubMed:18086888). Interacts with NSMCE3 (PubMed:27427983).</text>
</comment>
<comment type="interaction">
    <interactant intactId="EBI-2557393">
        <id>Q9NXX6</id>
    </interactant>
    <interactant intactId="EBI-2557356">
        <id>Q96MG7</id>
        <label>NSMCE3</label>
    </interactant>
    <organismsDiffer>false</organismsDiffer>
    <experiments>6</experiments>
</comment>
<comment type="interaction">
    <interactant intactId="EBI-25905546">
        <id>Q9NXX6-2</id>
    </interactant>
    <interactant intactId="EBI-948266">
        <id>O14901</id>
        <label>KLF11</label>
    </interactant>
    <organismsDiffer>false</organismsDiffer>
    <experiments>3</experiments>
</comment>
<comment type="subcellular location">
    <subcellularLocation>
        <location evidence="2">Nucleus</location>
    </subcellularLocation>
    <subcellularLocation>
        <location evidence="7">Chromosome</location>
        <location evidence="7">Telomere</location>
    </subcellularLocation>
</comment>
<comment type="alternative products">
    <event type="alternative splicing"/>
    <isoform>
        <id>Q9NXX6-1</id>
        <name>1</name>
        <sequence type="displayed"/>
    </isoform>
    <isoform>
        <id>Q9NXX6-2</id>
        <name>2</name>
        <sequence type="described" ref="VSP_014601 VSP_014602"/>
    </isoform>
</comment>
<comment type="similarity">
    <text evidence="6">Belongs to the NSE4 family.</text>
</comment>
<accession>Q9NXX6</accession>
<accession>Q5SQQ5</accession>
<accession>Q6P673</accession>
<accession>Q8WY66</accession>
<accession>Q9BS90</accession>
<dbReference type="EMBL" id="AK000010">
    <property type="protein sequence ID" value="BAA90881.1"/>
    <property type="molecule type" value="mRNA"/>
</dbReference>
<dbReference type="EMBL" id="AK222487">
    <property type="protein sequence ID" value="BAD96207.1"/>
    <property type="molecule type" value="mRNA"/>
</dbReference>
<dbReference type="EMBL" id="AL731566">
    <property type="status" value="NOT_ANNOTATED_CDS"/>
    <property type="molecule type" value="Genomic_DNA"/>
</dbReference>
<dbReference type="EMBL" id="BC005212">
    <property type="protein sequence ID" value="AAH05212.1"/>
    <property type="molecule type" value="mRNA"/>
</dbReference>
<dbReference type="EMBL" id="BC062427">
    <property type="protein sequence ID" value="AAH62427.1"/>
    <property type="molecule type" value="mRNA"/>
</dbReference>
<dbReference type="EMBL" id="AF258584">
    <property type="protein sequence ID" value="AAG23787.1"/>
    <property type="molecule type" value="mRNA"/>
</dbReference>
<dbReference type="CCDS" id="CCDS7624.1">
    <molecule id="Q9NXX6-1"/>
</dbReference>
<dbReference type="CCDS" id="CCDS91366.1">
    <molecule id="Q9NXX6-2"/>
</dbReference>
<dbReference type="RefSeq" id="NP_001161337.1">
    <property type="nucleotide sequence ID" value="NM_001167865.1"/>
</dbReference>
<dbReference type="RefSeq" id="NP_001398002.1">
    <molecule id="Q9NXX6-2"/>
    <property type="nucleotide sequence ID" value="NM_001411073.1"/>
</dbReference>
<dbReference type="RefSeq" id="NP_060085.2">
    <molecule id="Q9NXX6-1"/>
    <property type="nucleotide sequence ID" value="NM_017615.3"/>
</dbReference>
<dbReference type="SMR" id="Q9NXX6"/>
<dbReference type="BioGRID" id="120147">
    <property type="interactions" value="95"/>
</dbReference>
<dbReference type="ComplexPortal" id="CPX-6086">
    <property type="entry name" value="SMC5-SMC6 SUMO ligase complex, NSE4EA variant"/>
</dbReference>
<dbReference type="CORUM" id="Q9NXX6"/>
<dbReference type="FunCoup" id="Q9NXX6">
    <property type="interactions" value="2469"/>
</dbReference>
<dbReference type="IntAct" id="Q9NXX6">
    <property type="interactions" value="42"/>
</dbReference>
<dbReference type="MINT" id="Q9NXX6"/>
<dbReference type="STRING" id="9606.ENSP00000358019"/>
<dbReference type="GlyGen" id="Q9NXX6">
    <property type="glycosylation" value="1 site, 1 O-linked glycan (1 site)"/>
</dbReference>
<dbReference type="iPTMnet" id="Q9NXX6"/>
<dbReference type="PhosphoSitePlus" id="Q9NXX6"/>
<dbReference type="BioMuta" id="NSMCE4A"/>
<dbReference type="DMDM" id="68565328"/>
<dbReference type="jPOST" id="Q9NXX6"/>
<dbReference type="MassIVE" id="Q9NXX6"/>
<dbReference type="PaxDb" id="9606-ENSP00000358019"/>
<dbReference type="PeptideAtlas" id="Q9NXX6"/>
<dbReference type="ProteomicsDB" id="83143">
    <molecule id="Q9NXX6-1"/>
</dbReference>
<dbReference type="ProteomicsDB" id="83144">
    <molecule id="Q9NXX6-2"/>
</dbReference>
<dbReference type="Pumba" id="Q9NXX6"/>
<dbReference type="Antibodypedia" id="48679">
    <property type="antibodies" value="91 antibodies from 17 providers"/>
</dbReference>
<dbReference type="DNASU" id="54780"/>
<dbReference type="Ensembl" id="ENST00000369017.5">
    <molecule id="Q9NXX6-2"/>
    <property type="protein sequence ID" value="ENSP00000358013.5"/>
    <property type="gene ID" value="ENSG00000107672.15"/>
</dbReference>
<dbReference type="Ensembl" id="ENST00000369023.8">
    <molecule id="Q9NXX6-1"/>
    <property type="protein sequence ID" value="ENSP00000358019.3"/>
    <property type="gene ID" value="ENSG00000107672.15"/>
</dbReference>
<dbReference type="GeneID" id="54780"/>
<dbReference type="KEGG" id="hsa:54780"/>
<dbReference type="MANE-Select" id="ENST00000369023.8">
    <property type="protein sequence ID" value="ENSP00000358019.3"/>
    <property type="RefSeq nucleotide sequence ID" value="NM_017615.3"/>
    <property type="RefSeq protein sequence ID" value="NP_060085.2"/>
</dbReference>
<dbReference type="UCSC" id="uc001lfs.4">
    <molecule id="Q9NXX6-1"/>
    <property type="organism name" value="human"/>
</dbReference>
<dbReference type="AGR" id="HGNC:25935"/>
<dbReference type="CTD" id="54780"/>
<dbReference type="GeneCards" id="NSMCE4A"/>
<dbReference type="HGNC" id="HGNC:25935">
    <property type="gene designation" value="NSMCE4A"/>
</dbReference>
<dbReference type="HPA" id="ENSG00000107672">
    <property type="expression patterns" value="Low tissue specificity"/>
</dbReference>
<dbReference type="MIM" id="612987">
    <property type="type" value="gene"/>
</dbReference>
<dbReference type="neXtProt" id="NX_Q9NXX6"/>
<dbReference type="OpenTargets" id="ENSG00000107672"/>
<dbReference type="PharmGKB" id="PA162398205"/>
<dbReference type="VEuPathDB" id="HostDB:ENSG00000107672"/>
<dbReference type="eggNOG" id="KOG2866">
    <property type="taxonomic scope" value="Eukaryota"/>
</dbReference>
<dbReference type="GeneTree" id="ENSGT00390000011476"/>
<dbReference type="HOGENOM" id="CLU_041037_3_0_1"/>
<dbReference type="InParanoid" id="Q9NXX6"/>
<dbReference type="OMA" id="FMGINRT"/>
<dbReference type="OrthoDB" id="361242at2759"/>
<dbReference type="PAN-GO" id="Q9NXX6">
    <property type="GO annotations" value="3 GO annotations based on evolutionary models"/>
</dbReference>
<dbReference type="PhylomeDB" id="Q9NXX6"/>
<dbReference type="TreeFam" id="TF313999"/>
<dbReference type="PathwayCommons" id="Q9NXX6"/>
<dbReference type="Reactome" id="R-HSA-3108214">
    <property type="pathway name" value="SUMOylation of DNA damage response and repair proteins"/>
</dbReference>
<dbReference type="SignaLink" id="Q9NXX6"/>
<dbReference type="SIGNOR" id="Q9NXX6"/>
<dbReference type="BioGRID-ORCS" id="54780">
    <property type="hits" value="317 hits in 1160 CRISPR screens"/>
</dbReference>
<dbReference type="GeneWiki" id="NSMCE4A"/>
<dbReference type="GenomeRNAi" id="54780"/>
<dbReference type="Pharos" id="Q9NXX6">
    <property type="development level" value="Tdark"/>
</dbReference>
<dbReference type="PRO" id="PR:Q9NXX6"/>
<dbReference type="Proteomes" id="UP000005640">
    <property type="component" value="Chromosome 10"/>
</dbReference>
<dbReference type="RNAct" id="Q9NXX6">
    <property type="molecule type" value="protein"/>
</dbReference>
<dbReference type="Bgee" id="ENSG00000107672">
    <property type="expression patterns" value="Expressed in oocyte and 199 other cell types or tissues"/>
</dbReference>
<dbReference type="GO" id="GO:0000781">
    <property type="term" value="C:chromosome, telomeric region"/>
    <property type="evidence" value="ECO:0000303"/>
    <property type="project" value="ComplexPortal"/>
</dbReference>
<dbReference type="GO" id="GO:0016604">
    <property type="term" value="C:nuclear body"/>
    <property type="evidence" value="ECO:0000314"/>
    <property type="project" value="HPA"/>
</dbReference>
<dbReference type="GO" id="GO:0005654">
    <property type="term" value="C:nucleoplasm"/>
    <property type="evidence" value="ECO:0000314"/>
    <property type="project" value="HPA"/>
</dbReference>
<dbReference type="GO" id="GO:0005634">
    <property type="term" value="C:nucleus"/>
    <property type="evidence" value="ECO:0000318"/>
    <property type="project" value="GO_Central"/>
</dbReference>
<dbReference type="GO" id="GO:0030915">
    <property type="term" value="C:Smc5-Smc6 complex"/>
    <property type="evidence" value="ECO:0000314"/>
    <property type="project" value="UniProtKB"/>
</dbReference>
<dbReference type="GO" id="GO:0140588">
    <property type="term" value="P:chromatin looping"/>
    <property type="evidence" value="ECO:0000303"/>
    <property type="project" value="ComplexPortal"/>
</dbReference>
<dbReference type="GO" id="GO:0006974">
    <property type="term" value="P:DNA damage response"/>
    <property type="evidence" value="ECO:0000315"/>
    <property type="project" value="UniProtKB"/>
</dbReference>
<dbReference type="GO" id="GO:0006281">
    <property type="term" value="P:DNA repair"/>
    <property type="evidence" value="ECO:0000318"/>
    <property type="project" value="GO_Central"/>
</dbReference>
<dbReference type="GO" id="GO:0000724">
    <property type="term" value="P:double-strand break repair via homologous recombination"/>
    <property type="evidence" value="ECO:0000303"/>
    <property type="project" value="ComplexPortal"/>
</dbReference>
<dbReference type="GO" id="GO:0016925">
    <property type="term" value="P:protein sumoylation"/>
    <property type="evidence" value="ECO:0000303"/>
    <property type="project" value="ComplexPortal"/>
</dbReference>
<dbReference type="GO" id="GO:0032204">
    <property type="term" value="P:regulation of telomere maintenance"/>
    <property type="evidence" value="ECO:0000303"/>
    <property type="project" value="ComplexPortal"/>
</dbReference>
<dbReference type="InterPro" id="IPR027786">
    <property type="entry name" value="Nse4/EID"/>
</dbReference>
<dbReference type="InterPro" id="IPR014854">
    <property type="entry name" value="Nse4_C"/>
</dbReference>
<dbReference type="InterPro" id="IPR029225">
    <property type="entry name" value="Nse4_Nse3-bd"/>
</dbReference>
<dbReference type="PANTHER" id="PTHR16140">
    <property type="entry name" value="NON-STRUCTURAL MAINTENANCE OF CHROMOSOMES ELEMENT 4"/>
    <property type="match status" value="1"/>
</dbReference>
<dbReference type="PANTHER" id="PTHR16140:SF2">
    <property type="entry name" value="NON-STRUCTURAL MAINTENANCE OF CHROMOSOMES ELEMENT 4 HOMOLOG A"/>
    <property type="match status" value="1"/>
</dbReference>
<dbReference type="Pfam" id="PF15412">
    <property type="entry name" value="Nse4-Nse3_bdg"/>
    <property type="match status" value="1"/>
</dbReference>
<dbReference type="Pfam" id="PF08743">
    <property type="entry name" value="Nse4_C"/>
    <property type="match status" value="1"/>
</dbReference>
<evidence type="ECO:0000256" key="1">
    <source>
        <dbReference type="SAM" id="MobiDB-lite"/>
    </source>
</evidence>
<evidence type="ECO:0000269" key="2">
    <source>
    </source>
</evidence>
<evidence type="ECO:0000269" key="3">
    <source>
    </source>
</evidence>
<evidence type="ECO:0000303" key="4">
    <source>
    </source>
</evidence>
<evidence type="ECO:0000303" key="5">
    <source>
    </source>
</evidence>
<evidence type="ECO:0000305" key="6"/>
<evidence type="ECO:0000305" key="7">
    <source>
    </source>
</evidence>
<evidence type="ECO:0007744" key="8">
    <source>
    </source>
</evidence>
<organism>
    <name type="scientific">Homo sapiens</name>
    <name type="common">Human</name>
    <dbReference type="NCBI Taxonomy" id="9606"/>
    <lineage>
        <taxon>Eukaryota</taxon>
        <taxon>Metazoa</taxon>
        <taxon>Chordata</taxon>
        <taxon>Craniata</taxon>
        <taxon>Vertebrata</taxon>
        <taxon>Euteleostomi</taxon>
        <taxon>Mammalia</taxon>
        <taxon>Eutheria</taxon>
        <taxon>Euarchontoglires</taxon>
        <taxon>Primates</taxon>
        <taxon>Haplorrhini</taxon>
        <taxon>Catarrhini</taxon>
        <taxon>Hominidae</taxon>
        <taxon>Homo</taxon>
    </lineage>
</organism>
<sequence length="385" mass="44301">MSGDSSGRGPEGRGRGRDPHRDRTRSRSRSRSPLSPRSRRGSARERREAPERPSLEDTEPSDSGDEMMDPASLEAEADQGLCRQIRHQYRALINSVQQNREDILNAGDKLTEVLEEANTLFNEVSRAREAVLDAHFLVLASDLGKEKAKQLRSDLSSFDMLRYVETLLTHMGVNPLEAEELIRDEDSPDFEFIVYDSWKITGRTAENTFNKTHTFHFLLGSIYGECPVPKPRVDRPRKVPVIQEERAMPAQLRRMEESHQEATEKEVERILGLLQTYFREDPDTPMSFFDFVVDPHSFPRTVENIFHVSFIIRDGFARIRLDQDRLPVIEPVSINEENEGFEHNTQVRNQGIIALSYRDWEEIVKTFEISEPVITPSQRQQKPSA</sequence>
<gene>
    <name type="primary">NSMCE4A</name>
    <name type="synonym">C10orf86</name>
    <name type="ORF">PP4762</name>
</gene>
<name>NSE4A_HUMAN</name>
<protein>
    <recommendedName>
        <fullName>Non-structural maintenance of chromosomes element 4 homolog A</fullName>
        <shortName>NS4EA</shortName>
        <shortName>Non-SMC element 4 homolog A</shortName>
    </recommendedName>
</protein>
<feature type="chain" id="PRO_0000214101" description="Non-structural maintenance of chromosomes element 4 homolog A">
    <location>
        <begin position="1"/>
        <end position="385"/>
    </location>
</feature>
<feature type="region of interest" description="Disordered" evidence="1">
    <location>
        <begin position="1"/>
        <end position="69"/>
    </location>
</feature>
<feature type="compositionally biased region" description="Basic and acidic residues" evidence="1">
    <location>
        <begin position="10"/>
        <end position="21"/>
    </location>
</feature>
<feature type="compositionally biased region" description="Basic and acidic residues" evidence="1">
    <location>
        <begin position="42"/>
        <end position="55"/>
    </location>
</feature>
<feature type="compositionally biased region" description="Acidic residues" evidence="1">
    <location>
        <begin position="56"/>
        <end position="68"/>
    </location>
</feature>
<feature type="modified residue" description="Phosphothreonine" evidence="8">
    <location>
        <position position="345"/>
    </location>
</feature>
<feature type="modified residue" description="Phosphoserine" evidence="8">
    <location>
        <position position="377"/>
    </location>
</feature>
<feature type="splice variant" id="VSP_014601" description="In isoform 2." evidence="4 5">
    <original>PDTPMSFFDFVVDPHSFPRTVENIFHVSFIIRDGF</original>
    <variation>RDSLTLSPRLECSGTISTHCNLHLLDSSNSPASAS</variation>
    <location>
        <begin position="282"/>
        <end position="316"/>
    </location>
</feature>
<feature type="splice variant" id="VSP_014602" description="In isoform 2." evidence="4 5">
    <location>
        <begin position="317"/>
        <end position="385"/>
    </location>
</feature>
<feature type="sequence variant" id="VAR_057657" description="In dbSNP:rs1065683.">
    <original>S</original>
    <variation>T</variation>
    <location>
        <position position="72"/>
    </location>
</feature>
<feature type="sequence conflict" description="In Ref. 1; BAA90881." evidence="6" ref="1">
    <original>K</original>
    <variation>I</variation>
    <location>
        <position position="145"/>
    </location>
</feature>
<feature type="sequence conflict" description="In Ref. 4; AAH62427." evidence="6" ref="4">
    <location>
        <position position="361"/>
    </location>
</feature>